<evidence type="ECO:0000255" key="1">
    <source>
        <dbReference type="HAMAP-Rule" id="MF_01351"/>
    </source>
</evidence>
<accession>Q8HVS2</accession>
<keyword id="KW-0004">4Fe-4S</keyword>
<keyword id="KW-0150">Chloroplast</keyword>
<keyword id="KW-0408">Iron</keyword>
<keyword id="KW-0411">Iron-sulfur</keyword>
<keyword id="KW-0472">Membrane</keyword>
<keyword id="KW-0479">Metal-binding</keyword>
<keyword id="KW-0520">NAD</keyword>
<keyword id="KW-0521">NADP</keyword>
<keyword id="KW-0934">Plastid</keyword>
<keyword id="KW-0618">Plastoquinone</keyword>
<keyword id="KW-0874">Quinone</keyword>
<keyword id="KW-0677">Repeat</keyword>
<keyword id="KW-0793">Thylakoid</keyword>
<keyword id="KW-1278">Translocase</keyword>
<protein>
    <recommendedName>
        <fullName evidence="1">NAD(P)H-quinone oxidoreductase subunit I, chloroplastic</fullName>
        <ecNumber evidence="1">7.1.1.-</ecNumber>
    </recommendedName>
    <alternativeName>
        <fullName evidence="1">NAD(P)H dehydrogenase subunit I</fullName>
        <shortName evidence="1">NDH subunit I</shortName>
    </alternativeName>
    <alternativeName>
        <fullName evidence="1">NADH-plastoquinone oxidoreductase subunit I</fullName>
    </alternativeName>
</protein>
<proteinExistence type="inferred from homology"/>
<organism>
    <name type="scientific">Galeana pratensis</name>
    <dbReference type="NCBI Taxonomy" id="176537"/>
    <lineage>
        <taxon>Eukaryota</taxon>
        <taxon>Viridiplantae</taxon>
        <taxon>Streptophyta</taxon>
        <taxon>Embryophyta</taxon>
        <taxon>Tracheophyta</taxon>
        <taxon>Spermatophyta</taxon>
        <taxon>Magnoliopsida</taxon>
        <taxon>eudicotyledons</taxon>
        <taxon>Gunneridae</taxon>
        <taxon>Pentapetalae</taxon>
        <taxon>asterids</taxon>
        <taxon>campanulids</taxon>
        <taxon>Asterales</taxon>
        <taxon>Asteraceae</taxon>
        <taxon>Asteroideae</taxon>
        <taxon>Heliantheae alliance</taxon>
        <taxon>Perityleae</taxon>
        <taxon>Galeana</taxon>
    </lineage>
</organism>
<feature type="chain" id="PRO_0000250791" description="NAD(P)H-quinone oxidoreductase subunit I, chloroplastic">
    <location>
        <begin position="1"/>
        <end position="166"/>
    </location>
</feature>
<feature type="domain" description="4Fe-4S ferredoxin-type 1" evidence="1">
    <location>
        <begin position="55"/>
        <end position="84"/>
    </location>
</feature>
<feature type="domain" description="4Fe-4S ferredoxin-type 2" evidence="1">
    <location>
        <begin position="95"/>
        <end position="124"/>
    </location>
</feature>
<feature type="binding site" evidence="1">
    <location>
        <position position="64"/>
    </location>
    <ligand>
        <name>[4Fe-4S] cluster</name>
        <dbReference type="ChEBI" id="CHEBI:49883"/>
        <label>1</label>
    </ligand>
</feature>
<feature type="binding site" evidence="1">
    <location>
        <position position="67"/>
    </location>
    <ligand>
        <name>[4Fe-4S] cluster</name>
        <dbReference type="ChEBI" id="CHEBI:49883"/>
        <label>1</label>
    </ligand>
</feature>
<feature type="binding site" evidence="1">
    <location>
        <position position="70"/>
    </location>
    <ligand>
        <name>[4Fe-4S] cluster</name>
        <dbReference type="ChEBI" id="CHEBI:49883"/>
        <label>1</label>
    </ligand>
</feature>
<feature type="binding site" evidence="1">
    <location>
        <position position="74"/>
    </location>
    <ligand>
        <name>[4Fe-4S] cluster</name>
        <dbReference type="ChEBI" id="CHEBI:49883"/>
        <label>2</label>
    </ligand>
</feature>
<feature type="binding site" evidence="1">
    <location>
        <position position="104"/>
    </location>
    <ligand>
        <name>[4Fe-4S] cluster</name>
        <dbReference type="ChEBI" id="CHEBI:49883"/>
        <label>2</label>
    </ligand>
</feature>
<feature type="binding site" evidence="1">
    <location>
        <position position="107"/>
    </location>
    <ligand>
        <name>[4Fe-4S] cluster</name>
        <dbReference type="ChEBI" id="CHEBI:49883"/>
        <label>2</label>
    </ligand>
</feature>
<feature type="binding site" evidence="1">
    <location>
        <position position="110"/>
    </location>
    <ligand>
        <name>[4Fe-4S] cluster</name>
        <dbReference type="ChEBI" id="CHEBI:49883"/>
        <label>2</label>
    </ligand>
</feature>
<feature type="binding site" evidence="1">
    <location>
        <position position="114"/>
    </location>
    <ligand>
        <name>[4Fe-4S] cluster</name>
        <dbReference type="ChEBI" id="CHEBI:49883"/>
        <label>1</label>
    </ligand>
</feature>
<name>NDHI_GALPT</name>
<dbReference type="EC" id="7.1.1.-" evidence="1"/>
<dbReference type="EMBL" id="AF383791">
    <property type="protein sequence ID" value="AAN61732.1"/>
    <property type="molecule type" value="Genomic_DNA"/>
</dbReference>
<dbReference type="SMR" id="Q8HVS2"/>
<dbReference type="GO" id="GO:0009535">
    <property type="term" value="C:chloroplast thylakoid membrane"/>
    <property type="evidence" value="ECO:0007669"/>
    <property type="project" value="UniProtKB-SubCell"/>
</dbReference>
<dbReference type="GO" id="GO:0051539">
    <property type="term" value="F:4 iron, 4 sulfur cluster binding"/>
    <property type="evidence" value="ECO:0007669"/>
    <property type="project" value="UniProtKB-KW"/>
</dbReference>
<dbReference type="GO" id="GO:0005506">
    <property type="term" value="F:iron ion binding"/>
    <property type="evidence" value="ECO:0007669"/>
    <property type="project" value="UniProtKB-UniRule"/>
</dbReference>
<dbReference type="GO" id="GO:0008137">
    <property type="term" value="F:NADH dehydrogenase (ubiquinone) activity"/>
    <property type="evidence" value="ECO:0007669"/>
    <property type="project" value="InterPro"/>
</dbReference>
<dbReference type="GO" id="GO:0048038">
    <property type="term" value="F:quinone binding"/>
    <property type="evidence" value="ECO:0007669"/>
    <property type="project" value="UniProtKB-KW"/>
</dbReference>
<dbReference type="GO" id="GO:0019684">
    <property type="term" value="P:photosynthesis, light reaction"/>
    <property type="evidence" value="ECO:0007669"/>
    <property type="project" value="UniProtKB-UniRule"/>
</dbReference>
<dbReference type="FunFam" id="3.30.70.3270:FF:000006">
    <property type="entry name" value="NAD(P)H-quinone oxidoreductase subunit I, chloroplastic"/>
    <property type="match status" value="1"/>
</dbReference>
<dbReference type="Gene3D" id="3.30.70.3270">
    <property type="match status" value="1"/>
</dbReference>
<dbReference type="HAMAP" id="MF_01351">
    <property type="entry name" value="NDH1_NuoI"/>
    <property type="match status" value="1"/>
</dbReference>
<dbReference type="InterPro" id="IPR017896">
    <property type="entry name" value="4Fe4S_Fe-S-bd"/>
</dbReference>
<dbReference type="InterPro" id="IPR017900">
    <property type="entry name" value="4Fe4S_Fe_S_CS"/>
</dbReference>
<dbReference type="InterPro" id="IPR010226">
    <property type="entry name" value="NADH_quinone_OxRdtase_chainI"/>
</dbReference>
<dbReference type="InterPro" id="IPR004497">
    <property type="entry name" value="NDHI"/>
</dbReference>
<dbReference type="NCBIfam" id="TIGR00403">
    <property type="entry name" value="ndhI"/>
    <property type="match status" value="1"/>
</dbReference>
<dbReference type="NCBIfam" id="TIGR01971">
    <property type="entry name" value="NuoI"/>
    <property type="match status" value="1"/>
</dbReference>
<dbReference type="NCBIfam" id="NF004537">
    <property type="entry name" value="PRK05888.1-3"/>
    <property type="match status" value="1"/>
</dbReference>
<dbReference type="PANTHER" id="PTHR47275">
    <property type="entry name" value="NAD(P)H-QUINONE OXIDOREDUCTASE SUBUNIT I, CHLOROPLASTIC"/>
    <property type="match status" value="1"/>
</dbReference>
<dbReference type="PANTHER" id="PTHR47275:SF1">
    <property type="entry name" value="NAD(P)H-QUINONE OXIDOREDUCTASE SUBUNIT I, CHLOROPLASTIC"/>
    <property type="match status" value="1"/>
</dbReference>
<dbReference type="Pfam" id="PF00037">
    <property type="entry name" value="Fer4"/>
    <property type="match status" value="2"/>
</dbReference>
<dbReference type="SUPFAM" id="SSF54862">
    <property type="entry name" value="4Fe-4S ferredoxins"/>
    <property type="match status" value="1"/>
</dbReference>
<dbReference type="PROSITE" id="PS00198">
    <property type="entry name" value="4FE4S_FER_1"/>
    <property type="match status" value="2"/>
</dbReference>
<dbReference type="PROSITE" id="PS51379">
    <property type="entry name" value="4FE4S_FER_2"/>
    <property type="match status" value="2"/>
</dbReference>
<comment type="function">
    <text evidence="1">NDH shuttles electrons from NAD(P)H:plastoquinone, via FMN and iron-sulfur (Fe-S) centers, to quinones in the photosynthetic chain and possibly in a chloroplast respiratory chain. The immediate electron acceptor for the enzyme in this species is believed to be plastoquinone. Couples the redox reaction to proton translocation, and thus conserves the redox energy in a proton gradient.</text>
</comment>
<comment type="catalytic activity">
    <reaction evidence="1">
        <text>a plastoquinone + NADH + (n+1) H(+)(in) = a plastoquinol + NAD(+) + n H(+)(out)</text>
        <dbReference type="Rhea" id="RHEA:42608"/>
        <dbReference type="Rhea" id="RHEA-COMP:9561"/>
        <dbReference type="Rhea" id="RHEA-COMP:9562"/>
        <dbReference type="ChEBI" id="CHEBI:15378"/>
        <dbReference type="ChEBI" id="CHEBI:17757"/>
        <dbReference type="ChEBI" id="CHEBI:57540"/>
        <dbReference type="ChEBI" id="CHEBI:57945"/>
        <dbReference type="ChEBI" id="CHEBI:62192"/>
    </reaction>
</comment>
<comment type="catalytic activity">
    <reaction evidence="1">
        <text>a plastoquinone + NADPH + (n+1) H(+)(in) = a plastoquinol + NADP(+) + n H(+)(out)</text>
        <dbReference type="Rhea" id="RHEA:42612"/>
        <dbReference type="Rhea" id="RHEA-COMP:9561"/>
        <dbReference type="Rhea" id="RHEA-COMP:9562"/>
        <dbReference type="ChEBI" id="CHEBI:15378"/>
        <dbReference type="ChEBI" id="CHEBI:17757"/>
        <dbReference type="ChEBI" id="CHEBI:57783"/>
        <dbReference type="ChEBI" id="CHEBI:58349"/>
        <dbReference type="ChEBI" id="CHEBI:62192"/>
    </reaction>
</comment>
<comment type="cofactor">
    <cofactor evidence="1">
        <name>[4Fe-4S] cluster</name>
        <dbReference type="ChEBI" id="CHEBI:49883"/>
    </cofactor>
    <text evidence="1">Binds 2 [4Fe-4S] clusters per subunit.</text>
</comment>
<comment type="subunit">
    <text evidence="1">NDH is composed of at least 16 different subunits, 5 of which are encoded in the nucleus.</text>
</comment>
<comment type="subcellular location">
    <subcellularLocation>
        <location evidence="1">Plastid</location>
        <location evidence="1">Chloroplast thylakoid membrane</location>
        <topology evidence="1">Peripheral membrane protein</topology>
    </subcellularLocation>
</comment>
<comment type="similarity">
    <text evidence="1">Belongs to the complex I 23 kDa subunit family.</text>
</comment>
<geneLocation type="chloroplast"/>
<reference key="1">
    <citation type="submission" date="2003-01" db="EMBL/GenBank/DDBJ databases">
        <title>Chloroplast DNA phylogeny of tribe Heliantheae (Asteraceae).</title>
        <authorList>
            <person name="Panero J.L."/>
            <person name="Baldwin B.G."/>
            <person name="Schilling E.E."/>
            <person name="Clevinger J.A."/>
        </authorList>
    </citation>
    <scope>NUCLEOTIDE SEQUENCE [GENOMIC DNA]</scope>
</reference>
<gene>
    <name evidence="1" type="primary">ndhI</name>
</gene>
<sequence length="166" mass="19475">MFPMVTEFMNYGQQTVRAARYIGQGFMITLSHANRLPVTIQYPYEKLITSERFRGRIHFEFDKCIACEVCVRVCPIDLPVVDWKLETDIRKKRLLNYSIDFGICIFCGNCVEYCPTNCLSMTEEYELSTYDRHELNYNQIALGRLPMSIIDDYTIRTILNLPEIKT</sequence>